<gene>
    <name evidence="1" type="primary">dnaG</name>
    <name type="ordered locus">Saci_0075</name>
</gene>
<organism>
    <name type="scientific">Sulfolobus acidocaldarius (strain ATCC 33909 / DSM 639 / JCM 8929 / NBRC 15157 / NCIMB 11770)</name>
    <dbReference type="NCBI Taxonomy" id="330779"/>
    <lineage>
        <taxon>Archaea</taxon>
        <taxon>Thermoproteota</taxon>
        <taxon>Thermoprotei</taxon>
        <taxon>Sulfolobales</taxon>
        <taxon>Sulfolobaceae</taxon>
        <taxon>Sulfolobus</taxon>
    </lineage>
</organism>
<proteinExistence type="inferred from homology"/>
<accession>Q4JCH7</accession>
<sequence length="412" mass="45689">MKYNIVFKFNVEGIVDKPDVIGAIFGQTENLFGDDFDLRELQDKGRLGRISVDLSTSKGRSEGTIIIPSNLDKVETALVAAMIENVDKVGPYNAEFKLIDIVDIREEKIKKIIGRAKEILGSWSREKTLDIREVINEITSSVKTGELTEYGPERLPAGPDVDKDPELIIVEGRADVINLLRYGYKNVIAVEGATGKIPQTLVDLTKQKKAVIAFLDGDHGGDLILKELLSSNIKLDYVARAPTGKEVEELTGKEIAKSLSNMVTIAQYIKKQQEAQQAIKQALATETTTTAVTTTSTQIQVEVKPEEKKEIQITVPAQIIEEIKKLPGTLEGILLDENWNIIEKIQVRDIVQKLENISADSIRYIVFDGVITQRLVDLASAKNIKMLIGARIGGINRRPKELELLSFNDIIS</sequence>
<reference key="1">
    <citation type="journal article" date="2005" name="J. Bacteriol.">
        <title>The genome of Sulfolobus acidocaldarius, a model organism of the Crenarchaeota.</title>
        <authorList>
            <person name="Chen L."/>
            <person name="Bruegger K."/>
            <person name="Skovgaard M."/>
            <person name="Redder P."/>
            <person name="She Q."/>
            <person name="Torarinsson E."/>
            <person name="Greve B."/>
            <person name="Awayez M."/>
            <person name="Zibat A."/>
            <person name="Klenk H.-P."/>
            <person name="Garrett R.A."/>
        </authorList>
    </citation>
    <scope>NUCLEOTIDE SEQUENCE [LARGE SCALE GENOMIC DNA]</scope>
    <source>
        <strain>ATCC 33909 / DSM 639 / JCM 8929 / NBRC 15157 / NCIMB 11770</strain>
    </source>
</reference>
<protein>
    <recommendedName>
        <fullName evidence="1">DNA primase DnaG</fullName>
        <ecNumber evidence="1">2.7.7.101</ecNumber>
    </recommendedName>
</protein>
<feature type="chain" id="PRO_0000240466" description="DNA primase DnaG">
    <location>
        <begin position="1"/>
        <end position="412"/>
    </location>
</feature>
<feature type="domain" description="Toprim" evidence="1">
    <location>
        <begin position="165"/>
        <end position="243"/>
    </location>
</feature>
<feature type="binding site" evidence="1">
    <location>
        <position position="171"/>
    </location>
    <ligand>
        <name>Mg(2+)</name>
        <dbReference type="ChEBI" id="CHEBI:18420"/>
        <label>1</label>
        <note>catalytic</note>
    </ligand>
</feature>
<feature type="binding site" evidence="1">
    <location>
        <position position="216"/>
    </location>
    <ligand>
        <name>Mg(2+)</name>
        <dbReference type="ChEBI" id="CHEBI:18420"/>
        <label>1</label>
        <note>catalytic</note>
    </ligand>
</feature>
<feature type="binding site" evidence="1">
    <location>
        <position position="216"/>
    </location>
    <ligand>
        <name>Mg(2+)</name>
        <dbReference type="ChEBI" id="CHEBI:18420"/>
        <label>2</label>
    </ligand>
</feature>
<feature type="binding site" evidence="1">
    <location>
        <position position="218"/>
    </location>
    <ligand>
        <name>Mg(2+)</name>
        <dbReference type="ChEBI" id="CHEBI:18420"/>
        <label>2</label>
    </ligand>
</feature>
<name>DNAG_SULAC</name>
<dbReference type="EC" id="2.7.7.101" evidence="1"/>
<dbReference type="EMBL" id="CP000077">
    <property type="protein sequence ID" value="AAY79502.1"/>
    <property type="molecule type" value="Genomic_DNA"/>
</dbReference>
<dbReference type="RefSeq" id="WP_011277003.1">
    <property type="nucleotide sequence ID" value="NC_007181.1"/>
</dbReference>
<dbReference type="SMR" id="Q4JCH7"/>
<dbReference type="STRING" id="330779.Saci_0075"/>
<dbReference type="GeneID" id="14550605"/>
<dbReference type="GeneID" id="78440430"/>
<dbReference type="KEGG" id="sai:Saci_0075"/>
<dbReference type="PATRIC" id="fig|330779.12.peg.69"/>
<dbReference type="eggNOG" id="arCOG04281">
    <property type="taxonomic scope" value="Archaea"/>
</dbReference>
<dbReference type="HOGENOM" id="CLU_034626_0_0_2"/>
<dbReference type="Proteomes" id="UP000001018">
    <property type="component" value="Chromosome"/>
</dbReference>
<dbReference type="GO" id="GO:0005737">
    <property type="term" value="C:cytoplasm"/>
    <property type="evidence" value="ECO:0007669"/>
    <property type="project" value="TreeGrafter"/>
</dbReference>
<dbReference type="GO" id="GO:0000428">
    <property type="term" value="C:DNA-directed RNA polymerase complex"/>
    <property type="evidence" value="ECO:0007669"/>
    <property type="project" value="UniProtKB-KW"/>
</dbReference>
<dbReference type="GO" id="GO:0000178">
    <property type="term" value="C:exosome (RNase complex)"/>
    <property type="evidence" value="ECO:0007669"/>
    <property type="project" value="UniProtKB-KW"/>
</dbReference>
<dbReference type="GO" id="GO:1990077">
    <property type="term" value="C:primosome complex"/>
    <property type="evidence" value="ECO:0007669"/>
    <property type="project" value="UniProtKB-KW"/>
</dbReference>
<dbReference type="GO" id="GO:0003899">
    <property type="term" value="F:DNA-directed RNA polymerase activity"/>
    <property type="evidence" value="ECO:0007669"/>
    <property type="project" value="InterPro"/>
</dbReference>
<dbReference type="GO" id="GO:0046872">
    <property type="term" value="F:metal ion binding"/>
    <property type="evidence" value="ECO:0007669"/>
    <property type="project" value="UniProtKB-KW"/>
</dbReference>
<dbReference type="GO" id="GO:0008143">
    <property type="term" value="F:poly(A) binding"/>
    <property type="evidence" value="ECO:0007669"/>
    <property type="project" value="InterPro"/>
</dbReference>
<dbReference type="GO" id="GO:0006269">
    <property type="term" value="P:DNA replication, synthesis of primer"/>
    <property type="evidence" value="ECO:0007669"/>
    <property type="project" value="UniProtKB-UniRule"/>
</dbReference>
<dbReference type="CDD" id="cd01029">
    <property type="entry name" value="TOPRIM_primases"/>
    <property type="match status" value="1"/>
</dbReference>
<dbReference type="Gene3D" id="3.40.1360.10">
    <property type="match status" value="1"/>
</dbReference>
<dbReference type="HAMAP" id="MF_00007">
    <property type="entry name" value="DNA_primase_DnaG_arc"/>
    <property type="match status" value="1"/>
</dbReference>
<dbReference type="InterPro" id="IPR050219">
    <property type="entry name" value="DnaG_primase"/>
</dbReference>
<dbReference type="InterPro" id="IPR020607">
    <property type="entry name" value="Primase_DnaG_arc"/>
</dbReference>
<dbReference type="InterPro" id="IPR034154">
    <property type="entry name" value="TOPRIM_DnaG/twinkle"/>
</dbReference>
<dbReference type="InterPro" id="IPR006171">
    <property type="entry name" value="TOPRIM_dom"/>
</dbReference>
<dbReference type="NCBIfam" id="NF003108">
    <property type="entry name" value="PRK04031.1-1"/>
    <property type="match status" value="1"/>
</dbReference>
<dbReference type="PANTHER" id="PTHR30313">
    <property type="entry name" value="DNA PRIMASE"/>
    <property type="match status" value="1"/>
</dbReference>
<dbReference type="PANTHER" id="PTHR30313:SF2">
    <property type="entry name" value="DNA PRIMASE"/>
    <property type="match status" value="1"/>
</dbReference>
<dbReference type="Pfam" id="PF13662">
    <property type="entry name" value="Toprim_4"/>
    <property type="match status" value="1"/>
</dbReference>
<dbReference type="SMART" id="SM00493">
    <property type="entry name" value="TOPRIM"/>
    <property type="match status" value="1"/>
</dbReference>
<dbReference type="SUPFAM" id="SSF110455">
    <property type="entry name" value="Toprim domain"/>
    <property type="match status" value="1"/>
</dbReference>
<dbReference type="PROSITE" id="PS50880">
    <property type="entry name" value="TOPRIM"/>
    <property type="match status" value="1"/>
</dbReference>
<comment type="function">
    <text evidence="1">RNA polymerase that catalyzes the synthesis of short RNA molecules used as primers for DNA polymerase during DNA replication. Also part of the exosome, which is a complex involved in RNA degradation. Acts as a poly(A)-binding protein that enhances the interaction between heteromeric, adenine-rich transcripts and the exosome.</text>
</comment>
<comment type="catalytic activity">
    <reaction evidence="1">
        <text>ssDNA + n NTP = ssDNA/pppN(pN)n-1 hybrid + (n-1) diphosphate.</text>
        <dbReference type="EC" id="2.7.7.101"/>
    </reaction>
</comment>
<comment type="cofactor">
    <cofactor evidence="1">
        <name>Mg(2+)</name>
        <dbReference type="ChEBI" id="CHEBI:18420"/>
    </cofactor>
    <text evidence="1">Binds two Mg(2+) per subunit.</text>
</comment>
<comment type="subunit">
    <text evidence="1">Forms a ternary complex with MCM helicase and DNA. Component of the archaeal exosome complex.</text>
</comment>
<comment type="similarity">
    <text evidence="1">Belongs to the archaeal DnaG primase family.</text>
</comment>
<evidence type="ECO:0000255" key="1">
    <source>
        <dbReference type="HAMAP-Rule" id="MF_00007"/>
    </source>
</evidence>
<keyword id="KW-0235">DNA replication</keyword>
<keyword id="KW-0240">DNA-directed RNA polymerase</keyword>
<keyword id="KW-0271">Exosome</keyword>
<keyword id="KW-0460">Magnesium</keyword>
<keyword id="KW-0479">Metal-binding</keyword>
<keyword id="KW-0548">Nucleotidyltransferase</keyword>
<keyword id="KW-0639">Primosome</keyword>
<keyword id="KW-1185">Reference proteome</keyword>
<keyword id="KW-0804">Transcription</keyword>
<keyword id="KW-0808">Transferase</keyword>